<organism>
    <name type="scientific">Oryza sativa subsp. japonica</name>
    <name type="common">Rice</name>
    <dbReference type="NCBI Taxonomy" id="39947"/>
    <lineage>
        <taxon>Eukaryota</taxon>
        <taxon>Viridiplantae</taxon>
        <taxon>Streptophyta</taxon>
        <taxon>Embryophyta</taxon>
        <taxon>Tracheophyta</taxon>
        <taxon>Spermatophyta</taxon>
        <taxon>Magnoliopsida</taxon>
        <taxon>Liliopsida</taxon>
        <taxon>Poales</taxon>
        <taxon>Poaceae</taxon>
        <taxon>BOP clade</taxon>
        <taxon>Oryzoideae</taxon>
        <taxon>Oryzeae</taxon>
        <taxon>Oryzinae</taxon>
        <taxon>Oryza</taxon>
        <taxon>Oryza sativa</taxon>
    </lineage>
</organism>
<gene>
    <name evidence="4" type="primary">FLO7</name>
    <name evidence="9" type="ordered locus">Os10g0463800</name>
    <name evidence="8" type="ordered locus">LOC_Os10g32680</name>
</gene>
<accession>Q337M4</accession>
<accession>B9G651</accession>
<accession>Q0IX62</accession>
<accession>Q8H916</accession>
<feature type="transit peptide" description="Chloroplast" evidence="1">
    <location>
        <begin position="1"/>
        <end position="49"/>
    </location>
</feature>
<feature type="chain" id="PRO_0000458132" description="2-oxoadipate dioxygenase/decarboxylase, chloroplastic/amyloplastic">
    <location>
        <begin position="50"/>
        <end position="364"/>
    </location>
</feature>
<feature type="binding site" evidence="3 10">
    <location>
        <position position="107"/>
    </location>
    <ligand>
        <name>2-oxoadipate</name>
        <dbReference type="ChEBI" id="CHEBI:57499"/>
    </ligand>
</feature>
<feature type="binding site" evidence="3 10">
    <location>
        <position position="107"/>
    </location>
    <ligand>
        <name>Fe(2+)</name>
        <dbReference type="ChEBI" id="CHEBI:29033"/>
    </ligand>
</feature>
<feature type="binding site" evidence="3 10">
    <location>
        <position position="111"/>
    </location>
    <ligand>
        <name>2-oxoadipate</name>
        <dbReference type="ChEBI" id="CHEBI:57499"/>
    </ligand>
</feature>
<feature type="binding site" evidence="3 10">
    <location>
        <position position="243"/>
    </location>
    <ligand>
        <name>Fe(2+)</name>
        <dbReference type="ChEBI" id="CHEBI:29033"/>
    </ligand>
</feature>
<feature type="binding site" evidence="3 10">
    <location>
        <position position="289"/>
    </location>
    <ligand>
        <name>2-oxoadipate</name>
        <dbReference type="ChEBI" id="CHEBI:57499"/>
    </ligand>
</feature>
<feature type="binding site" evidence="3 10">
    <location>
        <position position="313"/>
    </location>
    <ligand>
        <name>2-oxoadipate</name>
        <dbReference type="ChEBI" id="CHEBI:57499"/>
    </ligand>
</feature>
<feature type="binding site" evidence="3 10">
    <location>
        <position position="315"/>
    </location>
    <ligand>
        <name>Fe(2+)</name>
        <dbReference type="ChEBI" id="CHEBI:29033"/>
    </ligand>
</feature>
<feature type="helix" evidence="11">
    <location>
        <begin position="64"/>
        <end position="84"/>
    </location>
</feature>
<feature type="helix" evidence="11">
    <location>
        <begin position="86"/>
        <end position="99"/>
    </location>
</feature>
<feature type="strand" evidence="11">
    <location>
        <begin position="105"/>
        <end position="113"/>
    </location>
</feature>
<feature type="helix" evidence="11">
    <location>
        <begin position="120"/>
        <end position="129"/>
    </location>
</feature>
<feature type="strand" evidence="11">
    <location>
        <begin position="133"/>
        <end position="140"/>
    </location>
</feature>
<feature type="turn" evidence="11">
    <location>
        <begin position="141"/>
        <end position="144"/>
    </location>
</feature>
<feature type="strand" evidence="11">
    <location>
        <begin position="145"/>
        <end position="151"/>
    </location>
</feature>
<feature type="helix" evidence="11">
    <location>
        <begin position="162"/>
        <end position="164"/>
    </location>
</feature>
<feature type="strand" evidence="11">
    <location>
        <begin position="169"/>
        <end position="175"/>
    </location>
</feature>
<feature type="helix" evidence="11">
    <location>
        <begin position="177"/>
        <end position="179"/>
    </location>
</feature>
<feature type="helix" evidence="11">
    <location>
        <begin position="182"/>
        <end position="195"/>
    </location>
</feature>
<feature type="helix" evidence="11">
    <location>
        <begin position="196"/>
        <end position="201"/>
    </location>
</feature>
<feature type="helix" evidence="11">
    <location>
        <begin position="202"/>
        <end position="208"/>
    </location>
</feature>
<feature type="helix" evidence="11">
    <location>
        <begin position="218"/>
        <end position="227"/>
    </location>
</feature>
<feature type="helix" evidence="11">
    <location>
        <begin position="229"/>
        <end position="237"/>
    </location>
</feature>
<feature type="strand" evidence="11">
    <location>
        <begin position="243"/>
        <end position="247"/>
    </location>
</feature>
<feature type="helix" evidence="11">
    <location>
        <begin position="248"/>
        <end position="250"/>
    </location>
</feature>
<feature type="helix" evidence="11">
    <location>
        <begin position="254"/>
        <end position="256"/>
    </location>
</feature>
<feature type="helix" evidence="11">
    <location>
        <begin position="258"/>
        <end position="267"/>
    </location>
</feature>
<feature type="strand" evidence="11">
    <location>
        <begin position="278"/>
        <end position="281"/>
    </location>
</feature>
<feature type="strand" evidence="11">
    <location>
        <begin position="287"/>
        <end position="292"/>
    </location>
</feature>
<feature type="strand" evidence="11">
    <location>
        <begin position="296"/>
        <end position="300"/>
    </location>
</feature>
<feature type="strand" evidence="11">
    <location>
        <begin position="306"/>
        <end position="310"/>
    </location>
</feature>
<feature type="strand" evidence="11">
    <location>
        <begin position="313"/>
        <end position="319"/>
    </location>
</feature>
<feature type="helix" evidence="11">
    <location>
        <begin position="323"/>
        <end position="325"/>
    </location>
</feature>
<feature type="helix" evidence="11">
    <location>
        <begin position="330"/>
        <end position="332"/>
    </location>
</feature>
<feature type="helix" evidence="11">
    <location>
        <begin position="335"/>
        <end position="337"/>
    </location>
</feature>
<feature type="helix" evidence="11">
    <location>
        <begin position="344"/>
        <end position="350"/>
    </location>
</feature>
<feature type="helix" evidence="11">
    <location>
        <begin position="351"/>
        <end position="354"/>
    </location>
</feature>
<feature type="helix" evidence="11">
    <location>
        <begin position="356"/>
        <end position="359"/>
    </location>
</feature>
<name>HGLS_ORYSJ</name>
<proteinExistence type="evidence at protein level"/>
<protein>
    <recommendedName>
        <fullName evidence="6">2-oxoadipate dioxygenase/decarboxylase, chloroplastic/amyloplastic</fullName>
        <ecNumber evidence="3">1.13.11.93</ecNumber>
    </recommendedName>
    <alternativeName>
        <fullName evidence="5">2-hydroxyglutarate synthase</fullName>
    </alternativeName>
    <alternativeName>
        <fullName evidence="4">Protein FLOURY ENDOSPERM 7</fullName>
    </alternativeName>
</protein>
<reference key="1">
    <citation type="journal article" date="2003" name="Science">
        <title>In-depth view of structure, activity, and evolution of rice chromosome 10.</title>
        <authorList>
            <person name="Yu Y."/>
            <person name="Rambo T."/>
            <person name="Currie J."/>
            <person name="Saski C."/>
            <person name="Kim H.-R."/>
            <person name="Collura K."/>
            <person name="Thompson S."/>
            <person name="Simmons J."/>
            <person name="Yang T.-J."/>
            <person name="Nah G."/>
            <person name="Patel A.J."/>
            <person name="Thurmond S."/>
            <person name="Henry D."/>
            <person name="Oates R."/>
            <person name="Palmer M."/>
            <person name="Pries G."/>
            <person name="Gibson J."/>
            <person name="Anderson H."/>
            <person name="Paradkar M."/>
            <person name="Crane L."/>
            <person name="Dale J."/>
            <person name="Carver M.B."/>
            <person name="Wood T."/>
            <person name="Frisch D."/>
            <person name="Engler F."/>
            <person name="Soderlund C."/>
            <person name="Palmer L.E."/>
            <person name="Teytelman L."/>
            <person name="Nascimento L."/>
            <person name="De la Bastide M."/>
            <person name="Spiegel L."/>
            <person name="Ware D."/>
            <person name="O'Shaughnessy A."/>
            <person name="Dike S."/>
            <person name="Dedhia N."/>
            <person name="Preston R."/>
            <person name="Huang E."/>
            <person name="Ferraro K."/>
            <person name="Kuit K."/>
            <person name="Miller B."/>
            <person name="Zutavern T."/>
            <person name="Katzenberger F."/>
            <person name="Muller S."/>
            <person name="Balija V."/>
            <person name="Martienssen R.A."/>
            <person name="Stein L."/>
            <person name="Minx P."/>
            <person name="Johnson D."/>
            <person name="Cordum H."/>
            <person name="Mardis E."/>
            <person name="Cheng Z."/>
            <person name="Jiang J."/>
            <person name="Wilson R."/>
            <person name="McCombie W.R."/>
            <person name="Wing R.A."/>
            <person name="Yuan Q."/>
            <person name="Ouyang S."/>
            <person name="Liu J."/>
            <person name="Jones K.M."/>
            <person name="Gansberger K."/>
            <person name="Moffat K."/>
            <person name="Hill J."/>
            <person name="Tsitrin T."/>
            <person name="Overton L."/>
            <person name="Bera J."/>
            <person name="Kim M."/>
            <person name="Jin S."/>
            <person name="Tallon L."/>
            <person name="Ciecko A."/>
            <person name="Pai G."/>
            <person name="Van Aken S."/>
            <person name="Utterback T."/>
            <person name="Reidmuller S."/>
            <person name="Bormann J."/>
            <person name="Feldblyum T."/>
            <person name="Hsiao J."/>
            <person name="Zismann V."/>
            <person name="Blunt S."/>
            <person name="de Vazeille A.R."/>
            <person name="Shaffer T."/>
            <person name="Koo H."/>
            <person name="Suh B."/>
            <person name="Yang Q."/>
            <person name="Haas B."/>
            <person name="Peterson J."/>
            <person name="Pertea M."/>
            <person name="Volfovsky N."/>
            <person name="Wortman J."/>
            <person name="White O."/>
            <person name="Salzberg S.L."/>
            <person name="Fraser C.M."/>
            <person name="Buell C.R."/>
            <person name="Messing J."/>
            <person name="Song R."/>
            <person name="Fuks G."/>
            <person name="Llaca V."/>
            <person name="Kovchak S."/>
            <person name="Young S."/>
            <person name="Bowers J.E."/>
            <person name="Paterson A.H."/>
            <person name="Johns M.A."/>
            <person name="Mao L."/>
            <person name="Pan H."/>
            <person name="Dean R.A."/>
        </authorList>
    </citation>
    <scope>NUCLEOTIDE SEQUENCE [LARGE SCALE GENOMIC DNA]</scope>
    <source>
        <strain>cv. Nipponbare</strain>
    </source>
</reference>
<reference key="2">
    <citation type="journal article" date="2005" name="Nature">
        <title>The map-based sequence of the rice genome.</title>
        <authorList>
            <consortium name="International rice genome sequencing project (IRGSP)"/>
        </authorList>
    </citation>
    <scope>NUCLEOTIDE SEQUENCE [LARGE SCALE GENOMIC DNA]</scope>
    <source>
        <strain>cv. Nipponbare</strain>
    </source>
</reference>
<reference key="3">
    <citation type="journal article" date="2008" name="Nucleic Acids Res.">
        <title>The rice annotation project database (RAP-DB): 2008 update.</title>
        <authorList>
            <consortium name="The rice annotation project (RAP)"/>
        </authorList>
    </citation>
    <scope>GENOME REANNOTATION</scope>
    <source>
        <strain>cv. Nipponbare</strain>
    </source>
</reference>
<reference key="4">
    <citation type="journal article" date="2013" name="Rice">
        <title>Improvement of the Oryza sativa Nipponbare reference genome using next generation sequence and optical map data.</title>
        <authorList>
            <person name="Kawahara Y."/>
            <person name="de la Bastide M."/>
            <person name="Hamilton J.P."/>
            <person name="Kanamori H."/>
            <person name="McCombie W.R."/>
            <person name="Ouyang S."/>
            <person name="Schwartz D.C."/>
            <person name="Tanaka T."/>
            <person name="Wu J."/>
            <person name="Zhou S."/>
            <person name="Childs K.L."/>
            <person name="Davidson R.M."/>
            <person name="Lin H."/>
            <person name="Quesada-Ocampo L."/>
            <person name="Vaillancourt B."/>
            <person name="Sakai H."/>
            <person name="Lee S.S."/>
            <person name="Kim J."/>
            <person name="Numa H."/>
            <person name="Itoh T."/>
            <person name="Buell C.R."/>
            <person name="Matsumoto T."/>
        </authorList>
    </citation>
    <scope>GENOME REANNOTATION</scope>
    <source>
        <strain>cv. Nipponbare</strain>
    </source>
</reference>
<reference key="5">
    <citation type="journal article" date="2005" name="PLoS Biol.">
        <title>The genomes of Oryza sativa: a history of duplications.</title>
        <authorList>
            <person name="Yu J."/>
            <person name="Wang J."/>
            <person name="Lin W."/>
            <person name="Li S."/>
            <person name="Li H."/>
            <person name="Zhou J."/>
            <person name="Ni P."/>
            <person name="Dong W."/>
            <person name="Hu S."/>
            <person name="Zeng C."/>
            <person name="Zhang J."/>
            <person name="Zhang Y."/>
            <person name="Li R."/>
            <person name="Xu Z."/>
            <person name="Li S."/>
            <person name="Li X."/>
            <person name="Zheng H."/>
            <person name="Cong L."/>
            <person name="Lin L."/>
            <person name="Yin J."/>
            <person name="Geng J."/>
            <person name="Li G."/>
            <person name="Shi J."/>
            <person name="Liu J."/>
            <person name="Lv H."/>
            <person name="Li J."/>
            <person name="Wang J."/>
            <person name="Deng Y."/>
            <person name="Ran L."/>
            <person name="Shi X."/>
            <person name="Wang X."/>
            <person name="Wu Q."/>
            <person name="Li C."/>
            <person name="Ren X."/>
            <person name="Wang J."/>
            <person name="Wang X."/>
            <person name="Li D."/>
            <person name="Liu D."/>
            <person name="Zhang X."/>
            <person name="Ji Z."/>
            <person name="Zhao W."/>
            <person name="Sun Y."/>
            <person name="Zhang Z."/>
            <person name="Bao J."/>
            <person name="Han Y."/>
            <person name="Dong L."/>
            <person name="Ji J."/>
            <person name="Chen P."/>
            <person name="Wu S."/>
            <person name="Liu J."/>
            <person name="Xiao Y."/>
            <person name="Bu D."/>
            <person name="Tan J."/>
            <person name="Yang L."/>
            <person name="Ye C."/>
            <person name="Zhang J."/>
            <person name="Xu J."/>
            <person name="Zhou Y."/>
            <person name="Yu Y."/>
            <person name="Zhang B."/>
            <person name="Zhuang S."/>
            <person name="Wei H."/>
            <person name="Liu B."/>
            <person name="Lei M."/>
            <person name="Yu H."/>
            <person name="Li Y."/>
            <person name="Xu H."/>
            <person name="Wei S."/>
            <person name="He X."/>
            <person name="Fang L."/>
            <person name="Zhang Z."/>
            <person name="Zhang Y."/>
            <person name="Huang X."/>
            <person name="Su Z."/>
            <person name="Tong W."/>
            <person name="Li J."/>
            <person name="Tong Z."/>
            <person name="Li S."/>
            <person name="Ye J."/>
            <person name="Wang L."/>
            <person name="Fang L."/>
            <person name="Lei T."/>
            <person name="Chen C.-S."/>
            <person name="Chen H.-C."/>
            <person name="Xu Z."/>
            <person name="Li H."/>
            <person name="Huang H."/>
            <person name="Zhang F."/>
            <person name="Xu H."/>
            <person name="Li N."/>
            <person name="Zhao C."/>
            <person name="Li S."/>
            <person name="Dong L."/>
            <person name="Huang Y."/>
            <person name="Li L."/>
            <person name="Xi Y."/>
            <person name="Qi Q."/>
            <person name="Li W."/>
            <person name="Zhang B."/>
            <person name="Hu W."/>
            <person name="Zhang Y."/>
            <person name="Tian X."/>
            <person name="Jiao Y."/>
            <person name="Liang X."/>
            <person name="Jin J."/>
            <person name="Gao L."/>
            <person name="Zheng W."/>
            <person name="Hao B."/>
            <person name="Liu S.-M."/>
            <person name="Wang W."/>
            <person name="Yuan L."/>
            <person name="Cao M."/>
            <person name="McDermott J."/>
            <person name="Samudrala R."/>
            <person name="Wang J."/>
            <person name="Wong G.K.-S."/>
            <person name="Yang H."/>
        </authorList>
    </citation>
    <scope>NUCLEOTIDE SEQUENCE [LARGE SCALE GENOMIC DNA]</scope>
    <source>
        <strain>cv. Nipponbare</strain>
    </source>
</reference>
<reference key="6">
    <citation type="journal article" date="2003" name="Science">
        <title>Collection, mapping, and annotation of over 28,000 cDNA clones from japonica rice.</title>
        <authorList>
            <consortium name="The rice full-length cDNA consortium"/>
        </authorList>
    </citation>
    <scope>NUCLEOTIDE SEQUENCE [LARGE SCALE MRNA]</scope>
    <source>
        <strain>cv. Nipponbare</strain>
    </source>
</reference>
<reference key="7">
    <citation type="journal article" date="2016" name="J. Exp. Bot.">
        <title>FLOURY ENDOSPERM7 encodes a regulator of starch synthesis and amyloplast development essential for peripheral endosperm development in rice.</title>
        <authorList>
            <person name="Zhang L."/>
            <person name="Ren Y."/>
            <person name="Lu B."/>
            <person name="Yang C."/>
            <person name="Feng Z."/>
            <person name="Liu Z."/>
            <person name="Chen J."/>
            <person name="Ma W."/>
            <person name="Wang Y."/>
            <person name="Yu X."/>
            <person name="Wang Y."/>
            <person name="Zhang W."/>
            <person name="Wang Y."/>
            <person name="Liu S."/>
            <person name="Wu F."/>
            <person name="Zhang X."/>
            <person name="Guo X."/>
            <person name="Bao Y."/>
            <person name="Jiang L."/>
            <person name="Wan J."/>
        </authorList>
    </citation>
    <scope>FUNCTION</scope>
    <scope>SUBCELLULAR LOCATION</scope>
    <scope>TISSUE SPECIFICITY</scope>
    <scope>DEVELOPMENTAL STAGE</scope>
    <scope>DISRUPTION PHENOTYPE</scope>
</reference>
<reference key="8">
    <citation type="journal article" date="2020" name="Nat. Commun.">
        <title>An iron (II) dependent oxygenase performs the last missing step of plant lysine catabolism.</title>
        <authorList>
            <person name="Thompson M.G."/>
            <person name="Blake-Hedges J.M."/>
            <person name="Pereira J.H."/>
            <person name="Hangasky J.A."/>
            <person name="Belcher M.S."/>
            <person name="Moore W.M."/>
            <person name="Barajas J.F."/>
            <person name="Cruz-Morales P."/>
            <person name="Washington L.J."/>
            <person name="Haushalter R.W."/>
            <person name="Eiben C.B."/>
            <person name="Liu Y."/>
            <person name="Skyrud W."/>
            <person name="Benites V.T."/>
            <person name="Barnum T.P."/>
            <person name="Baidoo E.E.K."/>
            <person name="Scheller H.V."/>
            <person name="Marletta M.A."/>
            <person name="Shih P.M."/>
            <person name="Adams P.D."/>
            <person name="Keasling J.D."/>
        </authorList>
    </citation>
    <scope>X-RAY CRYSTALLOGRAPHY (1.85 ANGSTROMS) OF 49-364 IN COMPLEXES WITH 2-OXOADIPATE AND NI(2+)</scope>
    <scope>CATALYTIC ACTIVITY</scope>
    <scope>COFACTOR</scope>
    <scope>BIOPHYSICOCHEMICAL PROPERTIES</scope>
</reference>
<evidence type="ECO:0000255" key="1"/>
<evidence type="ECO:0000269" key="2">
    <source>
    </source>
</evidence>
<evidence type="ECO:0000269" key="3">
    <source>
    </source>
</evidence>
<evidence type="ECO:0000303" key="4">
    <source>
    </source>
</evidence>
<evidence type="ECO:0000303" key="5">
    <source>
    </source>
</evidence>
<evidence type="ECO:0000305" key="6"/>
<evidence type="ECO:0000305" key="7">
    <source>
    </source>
</evidence>
<evidence type="ECO:0000312" key="8">
    <source>
        <dbReference type="EMBL" id="ABB47766.1"/>
    </source>
</evidence>
<evidence type="ECO:0000312" key="9">
    <source>
        <dbReference type="EMBL" id="BAT11192.1"/>
    </source>
</evidence>
<evidence type="ECO:0007744" key="10">
    <source>
        <dbReference type="PDB" id="6W1K"/>
    </source>
</evidence>
<evidence type="ECO:0007829" key="11">
    <source>
        <dbReference type="PDB" id="6W1K"/>
    </source>
</evidence>
<dbReference type="EC" id="1.13.11.93" evidence="3"/>
<dbReference type="EMBL" id="AC027038">
    <property type="protein sequence ID" value="AAN05517.1"/>
    <property type="status" value="ALT_INIT"/>
    <property type="molecule type" value="Genomic_DNA"/>
</dbReference>
<dbReference type="EMBL" id="DP000086">
    <property type="protein sequence ID" value="ABB47766.1"/>
    <property type="molecule type" value="Genomic_DNA"/>
</dbReference>
<dbReference type="EMBL" id="AP008216">
    <property type="protein sequence ID" value="BAF26703.1"/>
    <property type="molecule type" value="Genomic_DNA"/>
</dbReference>
<dbReference type="EMBL" id="AP014966">
    <property type="protein sequence ID" value="BAT11192.1"/>
    <property type="molecule type" value="Genomic_DNA"/>
</dbReference>
<dbReference type="EMBL" id="CM000147">
    <property type="protein sequence ID" value="EEE51098.1"/>
    <property type="status" value="ALT_INIT"/>
    <property type="molecule type" value="Genomic_DNA"/>
</dbReference>
<dbReference type="EMBL" id="AK102352">
    <property type="protein sequence ID" value="BAG95512.1"/>
    <property type="molecule type" value="mRNA"/>
</dbReference>
<dbReference type="PDB" id="6W1K">
    <property type="method" value="X-ray"/>
    <property type="resolution" value="1.85 A"/>
    <property type="chains" value="A/B/C/D=49-364"/>
</dbReference>
<dbReference type="PDBsum" id="6W1K"/>
<dbReference type="SMR" id="Q337M4"/>
<dbReference type="FunCoup" id="Q337M4">
    <property type="interactions" value="318"/>
</dbReference>
<dbReference type="PaxDb" id="39947-Q337M4"/>
<dbReference type="EnsemblPlants" id="Os10t0463800-01">
    <property type="protein sequence ID" value="Os10t0463800-01"/>
    <property type="gene ID" value="Os10g0463800"/>
</dbReference>
<dbReference type="Gramene" id="Os10t0463800-01">
    <property type="protein sequence ID" value="Os10t0463800-01"/>
    <property type="gene ID" value="Os10g0463800"/>
</dbReference>
<dbReference type="KEGG" id="dosa:Os10g0463800"/>
<dbReference type="KEGG" id="osa:4348829"/>
<dbReference type="eggNOG" id="ENOG502QTNU">
    <property type="taxonomic scope" value="Eukaryota"/>
</dbReference>
<dbReference type="HOGENOM" id="CLU_053061_0_0_1"/>
<dbReference type="InParanoid" id="Q337M4"/>
<dbReference type="OMA" id="FTDFGYV"/>
<dbReference type="OrthoDB" id="1908993at2759"/>
<dbReference type="Proteomes" id="UP000000763">
    <property type="component" value="Chromosome 10"/>
</dbReference>
<dbReference type="Proteomes" id="UP000007752">
    <property type="component" value="Chromosome 10"/>
</dbReference>
<dbReference type="Proteomes" id="UP000059680">
    <property type="component" value="Chromosome 10"/>
</dbReference>
<dbReference type="GO" id="GO:0009501">
    <property type="term" value="C:amyloplast"/>
    <property type="evidence" value="ECO:0007669"/>
    <property type="project" value="UniProtKB-SubCell"/>
</dbReference>
<dbReference type="GO" id="GO:0009507">
    <property type="term" value="C:chloroplast"/>
    <property type="evidence" value="ECO:0007669"/>
    <property type="project" value="UniProtKB-SubCell"/>
</dbReference>
<dbReference type="GO" id="GO:0051213">
    <property type="term" value="F:dioxygenase activity"/>
    <property type="evidence" value="ECO:0007669"/>
    <property type="project" value="UniProtKB-KW"/>
</dbReference>
<dbReference type="GO" id="GO:0046872">
    <property type="term" value="F:metal ion binding"/>
    <property type="evidence" value="ECO:0007669"/>
    <property type="project" value="UniProtKB-KW"/>
</dbReference>
<dbReference type="CDD" id="cd16350">
    <property type="entry name" value="VOC_like"/>
    <property type="match status" value="1"/>
</dbReference>
<dbReference type="Gene3D" id="3.10.180.50">
    <property type="match status" value="1"/>
</dbReference>
<dbReference type="InterPro" id="IPR009770">
    <property type="entry name" value="HGLS"/>
</dbReference>
<dbReference type="PANTHER" id="PTHR31136:SF5">
    <property type="entry name" value="2-OXOADIPATE DIOXYGENASE_DECARBOXYLASE, CHLOROPLASTIC"/>
    <property type="match status" value="1"/>
</dbReference>
<dbReference type="PANTHER" id="PTHR31136">
    <property type="entry name" value="DUF1338 DOMAIN-CONTAINING PROTEIN"/>
    <property type="match status" value="1"/>
</dbReference>
<dbReference type="Pfam" id="PF07063">
    <property type="entry name" value="HGLS"/>
    <property type="match status" value="1"/>
</dbReference>
<dbReference type="SMART" id="SM01150">
    <property type="entry name" value="DUF1338"/>
    <property type="match status" value="1"/>
</dbReference>
<keyword id="KW-0002">3D-structure</keyword>
<keyword id="KW-0035">Amyloplast</keyword>
<keyword id="KW-0150">Chloroplast</keyword>
<keyword id="KW-0223">Dioxygenase</keyword>
<keyword id="KW-0408">Iron</keyword>
<keyword id="KW-0479">Metal-binding</keyword>
<keyword id="KW-0560">Oxidoreductase</keyword>
<keyword id="KW-0934">Plastid</keyword>
<keyword id="KW-1185">Reference proteome</keyword>
<keyword id="KW-0809">Transit peptide</keyword>
<comment type="function">
    <text evidence="2 3">Catalyzes the decarboxylation and hydroxylation of 2-oxoadipate (2OA) to form D-2-hydroxyglutarate (D-2-HGA) (PubMed:32523014). Is involved in a D-lysine catabolic pathway (PubMed:32523014). Involved in the regulation of starch synthesis and amyloplast development within the peripheral endosperm during the grain-filling stage (PubMed:26608643).</text>
</comment>
<comment type="catalytic activity">
    <reaction evidence="3">
        <text>2-oxoadipate + O2 = (R)-2-hydroxyglutarate + CO2</text>
        <dbReference type="Rhea" id="RHEA:71787"/>
        <dbReference type="ChEBI" id="CHEBI:15379"/>
        <dbReference type="ChEBI" id="CHEBI:15801"/>
        <dbReference type="ChEBI" id="CHEBI:16526"/>
        <dbReference type="ChEBI" id="CHEBI:57499"/>
        <dbReference type="EC" id="1.13.11.93"/>
    </reaction>
    <physiologicalReaction direction="left-to-right" evidence="3">
        <dbReference type="Rhea" id="RHEA:71788"/>
    </physiologicalReaction>
</comment>
<comment type="cofactor">
    <cofactor evidence="7">
        <name>Fe(2+)</name>
        <dbReference type="ChEBI" id="CHEBI:29033"/>
    </cofactor>
</comment>
<comment type="biophysicochemical properties">
    <kinetics>
        <KM evidence="3">0.55 mM for 2-oxoadipate</KM>
        <Vmax evidence="3">0.89 mmol/min/ug enzyme toward 2-oxoadipate</Vmax>
    </kinetics>
</comment>
<comment type="pathway">
    <text evidence="6">Amino-acid degradation.</text>
</comment>
<comment type="subcellular location">
    <subcellularLocation>
        <location evidence="2">Plastid</location>
        <location evidence="2">Chloroplast</location>
    </subcellularLocation>
    <subcellularLocation>
        <location evidence="2">Plastid</location>
        <location evidence="2">Amyloplast</location>
    </subcellularLocation>
    <text evidence="2">Localizes to amyloplast stroma in developing endosperm cells.</text>
</comment>
<comment type="tissue specificity">
    <text evidence="2">Expressed in roots, stems, leaf sheaths, leaf blades, panicles, and endosperm.</text>
</comment>
<comment type="developmental stage">
    <text evidence="2">Expressed during endosperm development with a peak at approximately 12 days after fertilization (DAF) and then gradually declines from 15 DAF.</text>
</comment>
<comment type="disruption phenotype">
    <text evidence="2">Reduced grain filling rate, reduced grain weight, reduced seed thickness, opaque periphery of grain endosperm and defect in starch accumulation in the periphery of the endosperm during seed development, due to lysine accumulation.</text>
</comment>
<comment type="similarity">
    <text evidence="6">Belongs to the 2-oxoadipate dioxygenase/decarboxylase family.</text>
</comment>
<comment type="sequence caution" evidence="6">
    <conflict type="erroneous initiation">
        <sequence resource="EMBL-CDS" id="AAN05517"/>
    </conflict>
    <text>Truncated N-terminus.</text>
</comment>
<comment type="sequence caution" evidence="6">
    <conflict type="erroneous initiation">
        <sequence resource="EMBL-CDS" id="EEE51098"/>
    </conflict>
    <text>Truncated N-terminus.</text>
</comment>
<sequence length="364" mass="39934">MAVALAGARSPGAGAILSLRRLAPAAAAPVRLGGSGTPGTRRRRGIAMAAAASAPPAPADALPKGADSFFRTVISNMEKVYLSRNPTAKTILELVRSYDGDHICYDHFAFRTFGVDGYGIKSLAEFFTDFGYVPREELRFPAKKLRALWFSPPTNDGYTGTGVYGPLPRIFISELLVDELSPQSQDIIQKYIRTSGKGNKHATLASTSGELTWEKPIYSDFQVLSRESEYAAWTLVNGYALNHTTISTHRLISDIRSINKFNKFVEDNGFKLNSEGGILKVSPDGLLQQSSTVADSALFTFADGITESIPRSYIEFAERLVLPQFKDLPNDEVNEHHRRDGFEVGNADKIFESTSNDQLTRRSA</sequence>